<reference key="1">
    <citation type="submission" date="2007-12" db="EMBL/GenBank/DDBJ databases">
        <authorList>
            <consortium name="NIH - Zebrafish Gene Collection (ZGC) project"/>
        </authorList>
    </citation>
    <scope>NUCLEOTIDE SEQUENCE [LARGE SCALE MRNA] (ISOFORM 1)</scope>
    <source>
        <tissue>Embryo</tissue>
    </source>
</reference>
<reference key="2">
    <citation type="journal article" date="2010" name="Genes Dev.">
        <title>A feedback loop mediated by degradation of an inhibitor is required to initiate neuronal differentiation.</title>
        <authorList>
            <person name="Sobieszczuk D.F."/>
            <person name="Poliakov A."/>
            <person name="Xu Q."/>
            <person name="Wilkinson D.G."/>
        </authorList>
    </citation>
    <scope>FUNCTION</scope>
    <scope>ALTERNATIVE SPLICING</scope>
    <scope>INTERACTION WITH CUL3 AND ZBTB16</scope>
    <scope>SUBCELLULAR LOCATION</scope>
    <scope>TISSUE SPECIFICITY</scope>
    <scope>DEVELOPMENTAL STAGE</scope>
    <scope>DISRUPTION PHENOTYPE</scope>
</reference>
<protein>
    <recommendedName>
        <fullName>BTB/POZ domain-containing protein 6-A</fullName>
    </recommendedName>
</protein>
<sequence length="540" mass="59805">MPAAPECRLSNHGRIMKCVTFLLLLPETLKKLKRASKHPGRLSVCYNILTLSLKKRMAAELYPVSDHATLQKSGAVMLSLPEKKRNVEPVSQTTASIATTPTTEQNINNNNVEIPSWHSAHPTLRERNALMFNNEQMADVHFIVGPPGESQRVPAHKYVLAVGSSVFCAMFYGDLAEGDSDIHIPDVEPAAFLILLKYMYSDEIELAPDTVLATLYAAKKYLVSALARACVGFLETSLEARNACVLLSQSRLFEEPELTQRCWEVIDAQAELALRSEGFSEIDLPTLESILHRETLNVKESVVFQAVLGWADAECRRQGLSPTSQNQRSVLGKALHLVRLPSMTLQEFADGAAQVDILTLEETHSIFLWYTAATKPSLGFPVNAREGLTAQRCHRFQSSAYRSNQWRYRGRCDSIQFAVDKRVFIAGLGLYGSSGGKAEYSVRIELKRQGVLLAQNLTKFVSDGSSSTFPVWFEHPVQVEQDAFYTVSAVLDGSELSYFGQEGMTEVQCGKVTFQFQCSSDSTNGTGVQGGQIPELIFYA</sequence>
<gene>
    <name type="primary">btbd6a</name>
    <name type="ORF">zgc:172197</name>
</gene>
<accession>A9JRD8</accession>
<name>BTB6A_DANRE</name>
<proteinExistence type="evidence at protein level"/>
<organism>
    <name type="scientific">Danio rerio</name>
    <name type="common">Zebrafish</name>
    <name type="synonym">Brachydanio rerio</name>
    <dbReference type="NCBI Taxonomy" id="7955"/>
    <lineage>
        <taxon>Eukaryota</taxon>
        <taxon>Metazoa</taxon>
        <taxon>Chordata</taxon>
        <taxon>Craniata</taxon>
        <taxon>Vertebrata</taxon>
        <taxon>Euteleostomi</taxon>
        <taxon>Actinopterygii</taxon>
        <taxon>Neopterygii</taxon>
        <taxon>Teleostei</taxon>
        <taxon>Ostariophysi</taxon>
        <taxon>Cypriniformes</taxon>
        <taxon>Danionidae</taxon>
        <taxon>Danioninae</taxon>
        <taxon>Danio</taxon>
    </lineage>
</organism>
<comment type="function">
    <text evidence="2">Adapter protein for the cul3 E3 ubiquitin-protein ligase complex. Promotes the export of zbtb16/plzf from the nucleus to the cytoplasm and targets zbtb16/plzf for ubiquitination and degradation. Up-regulates neurog1 expression and antagonizes zbtb16/plzf, to promote neurogenesis.</text>
</comment>
<comment type="subunit">
    <text evidence="2">Interacts with cul3. Interacts (via BTB domain) with zbtb16/plzf.</text>
</comment>
<comment type="subcellular location">
    <subcellularLocation>
        <location evidence="2">Cytoplasm</location>
    </subcellularLocation>
    <subcellularLocation>
        <location evidence="2">Nucleus</location>
    </subcellularLocation>
    <text evidence="2">Present mainly, but not excusively in the cytoplasm.</text>
</comment>
<comment type="alternative products">
    <event type="alternative splicing"/>
    <isoform>
        <id>A9JRD8-1</id>
        <name>1</name>
        <name>btbd6a1</name>
        <sequence type="displayed"/>
    </isoform>
    <isoform>
        <id>A9JRD8-2</id>
        <name>2</name>
        <name>btbd6a2</name>
        <sequence type="described" ref="VSP_059269"/>
    </isoform>
</comment>
<comment type="tissue specificity">
    <text evidence="2">Expressed in the developing central nervous system.</text>
</comment>
<comment type="developmental stage">
    <text evidence="2">Expressed during primary neurogenesis. At the 3 somite stage (3s), expressed in rostrocaudal stripes in the posterior neural plate characteristic of the lateral zone, intermediate zone, and medial zone of primary neurogenesis. At 14s and 20 hpf, widely expressed in the spinal cord. By 24 hpf, becomes restricted to the posterior spinal cord. Expression also occurs in a dynamic segmental pattern in the hindbrain, at the mid-hindbrain boundary, cranial ganglia, midbrain, and forebrain. Isoform 1: Expressed throughout early development. Isoform 2: up-regulated from 9 hpf, when neurogenesis is initiated.</text>
</comment>
<comment type="disruption phenotype">
    <text evidence="2">Morpholino knockdown of both isoform 1 and isoform 2 leads to a major decrease in the expression of neurog1 and downstream markers of neuronal differentiation. Knockdown of either isoform alone leads to a mild decrease in the expression of late markers of neurogenesis, but has no detectable effect on neurog1 expression.</text>
</comment>
<comment type="sequence caution" evidence="4">
    <conflict type="erroneous initiation">
        <sequence resource="EMBL-CDS" id="AAI55623"/>
    </conflict>
    <text>Truncated N-terminus.</text>
</comment>
<keyword id="KW-0025">Alternative splicing</keyword>
<keyword id="KW-0963">Cytoplasm</keyword>
<keyword id="KW-0217">Developmental protein</keyword>
<keyword id="KW-0221">Differentiation</keyword>
<keyword id="KW-0524">Neurogenesis</keyword>
<keyword id="KW-0539">Nucleus</keyword>
<keyword id="KW-1185">Reference proteome</keyword>
<keyword id="KW-0833">Ubl conjugation pathway</keyword>
<feature type="chain" id="PRO_0000380249" description="BTB/POZ domain-containing protein 6-A">
    <location>
        <begin position="1"/>
        <end position="540"/>
    </location>
</feature>
<feature type="domain" description="BTB" evidence="1">
    <location>
        <begin position="138"/>
        <end position="208"/>
    </location>
</feature>
<feature type="splice variant" id="VSP_059269" description="In isoform 2." evidence="3">
    <location>
        <begin position="1"/>
        <end position="56"/>
    </location>
</feature>
<dbReference type="EMBL" id="BC155622">
    <property type="protein sequence ID" value="AAI55623.1"/>
    <property type="status" value="ALT_INIT"/>
    <property type="molecule type" value="mRNA"/>
</dbReference>
<dbReference type="RefSeq" id="NP_001108397.1">
    <property type="nucleotide sequence ID" value="NM_001114925.1"/>
</dbReference>
<dbReference type="SMR" id="A9JRD8"/>
<dbReference type="BioGRID" id="283159">
    <property type="interactions" value="2"/>
</dbReference>
<dbReference type="FunCoup" id="A9JRD8">
    <property type="interactions" value="545"/>
</dbReference>
<dbReference type="STRING" id="7955.ENSDARP00000146109"/>
<dbReference type="PaxDb" id="7955-ENSDARP00000094404"/>
<dbReference type="GeneID" id="100141360"/>
<dbReference type="KEGG" id="dre:100141360"/>
<dbReference type="AGR" id="ZFIN:ZDB-GENE-080218-26"/>
<dbReference type="CTD" id="100141360"/>
<dbReference type="ZFIN" id="ZDB-GENE-080218-26">
    <property type="gene designation" value="btbd6a"/>
</dbReference>
<dbReference type="eggNOG" id="KOG2075">
    <property type="taxonomic scope" value="Eukaryota"/>
</dbReference>
<dbReference type="InParanoid" id="A9JRD8"/>
<dbReference type="OrthoDB" id="636773at2759"/>
<dbReference type="PhylomeDB" id="A9JRD8"/>
<dbReference type="PRO" id="PR:A9JRD8"/>
<dbReference type="Proteomes" id="UP000000437">
    <property type="component" value="Chromosome 13"/>
</dbReference>
<dbReference type="GO" id="GO:0005829">
    <property type="term" value="C:cytosol"/>
    <property type="evidence" value="ECO:0000318"/>
    <property type="project" value="GO_Central"/>
</dbReference>
<dbReference type="GO" id="GO:0005634">
    <property type="term" value="C:nucleus"/>
    <property type="evidence" value="ECO:0007669"/>
    <property type="project" value="UniProtKB-SubCell"/>
</dbReference>
<dbReference type="GO" id="GO:0022008">
    <property type="term" value="P:neurogenesis"/>
    <property type="evidence" value="ECO:0000318"/>
    <property type="project" value="GO_Central"/>
</dbReference>
<dbReference type="GO" id="GO:0050767">
    <property type="term" value="P:regulation of neurogenesis"/>
    <property type="evidence" value="ECO:0000315"/>
    <property type="project" value="ZFIN"/>
</dbReference>
<dbReference type="CDD" id="cd18488">
    <property type="entry name" value="BACK_BTBD3_like"/>
    <property type="match status" value="1"/>
</dbReference>
<dbReference type="CDD" id="cd18349">
    <property type="entry name" value="BTB_POZ_BTBD6"/>
    <property type="match status" value="1"/>
</dbReference>
<dbReference type="FunFam" id="1.25.40.420:FF:000003">
    <property type="entry name" value="BTB/POZ domain-containing protein 3"/>
    <property type="match status" value="1"/>
</dbReference>
<dbReference type="FunFam" id="2.60.120.820:FF:000001">
    <property type="entry name" value="BTB/POZ domain-containing protein 3"/>
    <property type="match status" value="1"/>
</dbReference>
<dbReference type="FunFam" id="3.30.710.10:FF:000015">
    <property type="entry name" value="BTB/POZ domain-containing protein 3"/>
    <property type="match status" value="1"/>
</dbReference>
<dbReference type="Gene3D" id="1.25.40.420">
    <property type="match status" value="1"/>
</dbReference>
<dbReference type="Gene3D" id="2.60.120.820">
    <property type="entry name" value="PHR domain"/>
    <property type="match status" value="1"/>
</dbReference>
<dbReference type="Gene3D" id="3.30.710.10">
    <property type="entry name" value="Potassium Channel Kv1.1, Chain A"/>
    <property type="match status" value="1"/>
</dbReference>
<dbReference type="InterPro" id="IPR011705">
    <property type="entry name" value="BACK"/>
</dbReference>
<dbReference type="InterPro" id="IPR000210">
    <property type="entry name" value="BTB/POZ_dom"/>
</dbReference>
<dbReference type="InterPro" id="IPR049738">
    <property type="entry name" value="BTB_POZ_BTBD6"/>
</dbReference>
<dbReference type="InterPro" id="IPR049737">
    <property type="entry name" value="Btbd6a-like_BACK"/>
</dbReference>
<dbReference type="InterPro" id="IPR012983">
    <property type="entry name" value="PHR"/>
</dbReference>
<dbReference type="InterPro" id="IPR038648">
    <property type="entry name" value="PHR_sf"/>
</dbReference>
<dbReference type="InterPro" id="IPR011333">
    <property type="entry name" value="SKP1/BTB/POZ_sf"/>
</dbReference>
<dbReference type="PANTHER" id="PTHR45774">
    <property type="entry name" value="BTB/POZ DOMAIN-CONTAINING"/>
    <property type="match status" value="1"/>
</dbReference>
<dbReference type="PANTHER" id="PTHR45774:SF5">
    <property type="entry name" value="BTB_POZ DOMAIN-CONTAINING PROTEIN 6"/>
    <property type="match status" value="1"/>
</dbReference>
<dbReference type="Pfam" id="PF07707">
    <property type="entry name" value="BACK"/>
    <property type="match status" value="1"/>
</dbReference>
<dbReference type="Pfam" id="PF00651">
    <property type="entry name" value="BTB"/>
    <property type="match status" value="1"/>
</dbReference>
<dbReference type="Pfam" id="PF08005">
    <property type="entry name" value="PHR"/>
    <property type="match status" value="1"/>
</dbReference>
<dbReference type="SMART" id="SM00875">
    <property type="entry name" value="BACK"/>
    <property type="match status" value="1"/>
</dbReference>
<dbReference type="SMART" id="SM00225">
    <property type="entry name" value="BTB"/>
    <property type="match status" value="1"/>
</dbReference>
<dbReference type="SUPFAM" id="SSF54695">
    <property type="entry name" value="POZ domain"/>
    <property type="match status" value="1"/>
</dbReference>
<dbReference type="PROSITE" id="PS50097">
    <property type="entry name" value="BTB"/>
    <property type="match status" value="1"/>
</dbReference>
<evidence type="ECO:0000255" key="1">
    <source>
        <dbReference type="PROSITE-ProRule" id="PRU00037"/>
    </source>
</evidence>
<evidence type="ECO:0000269" key="2">
    <source>
    </source>
</evidence>
<evidence type="ECO:0000303" key="3">
    <source>
    </source>
</evidence>
<evidence type="ECO:0000305" key="4"/>